<accession>Q9Y5Q0</accession>
<accession>O60426</accession>
<dbReference type="EC" id="1.14.19.-" evidence="6 7 8"/>
<dbReference type="EMBL" id="AF084560">
    <property type="protein sequence ID" value="AAG23122.1"/>
    <property type="molecule type" value="mRNA"/>
</dbReference>
<dbReference type="EMBL" id="AF134404">
    <property type="protein sequence ID" value="AAD31282.1"/>
    <property type="molecule type" value="mRNA"/>
</dbReference>
<dbReference type="EMBL" id="AC004770">
    <property type="protein sequence ID" value="AAC23396.1"/>
    <property type="status" value="ALT_SEQ"/>
    <property type="molecule type" value="Genomic_DNA"/>
</dbReference>
<dbReference type="EMBL" id="AP006260">
    <property type="status" value="NOT_ANNOTATED_CDS"/>
    <property type="molecule type" value="Genomic_DNA"/>
</dbReference>
<dbReference type="EMBL" id="BC004901">
    <property type="protein sequence ID" value="AAH04901.1"/>
    <property type="molecule type" value="mRNA"/>
</dbReference>
<dbReference type="CCDS" id="CCDS8013.1"/>
<dbReference type="RefSeq" id="NP_068373.1">
    <property type="nucleotide sequence ID" value="NM_021727.5"/>
</dbReference>
<dbReference type="SMR" id="Q9Y5Q0"/>
<dbReference type="BioGRID" id="110182">
    <property type="interactions" value="49"/>
</dbReference>
<dbReference type="FunCoup" id="Q9Y5Q0">
    <property type="interactions" value="83"/>
</dbReference>
<dbReference type="IntAct" id="Q9Y5Q0">
    <property type="interactions" value="32"/>
</dbReference>
<dbReference type="STRING" id="9606.ENSP00000278829"/>
<dbReference type="SwissLipids" id="SLP:000000278"/>
<dbReference type="iPTMnet" id="Q9Y5Q0"/>
<dbReference type="PhosphoSitePlus" id="Q9Y5Q0"/>
<dbReference type="BioMuta" id="FADS3"/>
<dbReference type="DMDM" id="74762790"/>
<dbReference type="jPOST" id="Q9Y5Q0"/>
<dbReference type="MassIVE" id="Q9Y5Q0"/>
<dbReference type="PaxDb" id="9606-ENSP00000278829"/>
<dbReference type="PeptideAtlas" id="Q9Y5Q0"/>
<dbReference type="ProteomicsDB" id="86470"/>
<dbReference type="Pumba" id="Q9Y5Q0"/>
<dbReference type="Antibodypedia" id="28347">
    <property type="antibodies" value="160 antibodies from 22 providers"/>
</dbReference>
<dbReference type="DNASU" id="3995"/>
<dbReference type="Ensembl" id="ENST00000278829.7">
    <property type="protein sequence ID" value="ENSP00000278829.2"/>
    <property type="gene ID" value="ENSG00000221968.9"/>
</dbReference>
<dbReference type="GeneID" id="3995"/>
<dbReference type="KEGG" id="hsa:3995"/>
<dbReference type="MANE-Select" id="ENST00000278829.7">
    <property type="protein sequence ID" value="ENSP00000278829.2"/>
    <property type="RefSeq nucleotide sequence ID" value="NM_021727.5"/>
    <property type="RefSeq protein sequence ID" value="NP_068373.1"/>
</dbReference>
<dbReference type="UCSC" id="uc001nsm.5">
    <property type="organism name" value="human"/>
</dbReference>
<dbReference type="AGR" id="HGNC:3576"/>
<dbReference type="CTD" id="3995"/>
<dbReference type="DisGeNET" id="3995"/>
<dbReference type="GeneCards" id="FADS3"/>
<dbReference type="HGNC" id="HGNC:3576">
    <property type="gene designation" value="FADS3"/>
</dbReference>
<dbReference type="HPA" id="ENSG00000221968">
    <property type="expression patterns" value="Low tissue specificity"/>
</dbReference>
<dbReference type="MIM" id="606150">
    <property type="type" value="gene"/>
</dbReference>
<dbReference type="neXtProt" id="NX_Q9Y5Q0"/>
<dbReference type="OpenTargets" id="ENSG00000221968"/>
<dbReference type="PharmGKB" id="PA27975"/>
<dbReference type="VEuPathDB" id="HostDB:ENSG00000221968"/>
<dbReference type="eggNOG" id="KOG4232">
    <property type="taxonomic scope" value="Eukaryota"/>
</dbReference>
<dbReference type="GeneTree" id="ENSGT00950000182990"/>
<dbReference type="InParanoid" id="Q9Y5Q0"/>
<dbReference type="OMA" id="CGWWMHE"/>
<dbReference type="OrthoDB" id="260091at2759"/>
<dbReference type="PAN-GO" id="Q9Y5Q0">
    <property type="GO annotations" value="2 GO annotations based on evolutionary models"/>
</dbReference>
<dbReference type="PhylomeDB" id="Q9Y5Q0"/>
<dbReference type="TreeFam" id="TF313604"/>
<dbReference type="BRENDA" id="1.14.19.30">
    <property type="organism ID" value="2681"/>
</dbReference>
<dbReference type="PathwayCommons" id="Q9Y5Q0"/>
<dbReference type="SignaLink" id="Q9Y5Q0"/>
<dbReference type="SIGNOR" id="Q9Y5Q0"/>
<dbReference type="UniPathway" id="UPA00222"/>
<dbReference type="UniPathway" id="UPA00658"/>
<dbReference type="BioGRID-ORCS" id="3995">
    <property type="hits" value="11 hits in 1156 CRISPR screens"/>
</dbReference>
<dbReference type="ChiTaRS" id="FADS3">
    <property type="organism name" value="human"/>
</dbReference>
<dbReference type="GenomeRNAi" id="3995"/>
<dbReference type="Pharos" id="Q9Y5Q0">
    <property type="development level" value="Tbio"/>
</dbReference>
<dbReference type="PRO" id="PR:Q9Y5Q0"/>
<dbReference type="Proteomes" id="UP000005640">
    <property type="component" value="Chromosome 11"/>
</dbReference>
<dbReference type="RNAct" id="Q9Y5Q0">
    <property type="molecule type" value="protein"/>
</dbReference>
<dbReference type="Bgee" id="ENSG00000221968">
    <property type="expression patterns" value="Expressed in tibial nerve and 215 other cell types or tissues"/>
</dbReference>
<dbReference type="ExpressionAtlas" id="Q9Y5Q0">
    <property type="expression patterns" value="baseline and differential"/>
</dbReference>
<dbReference type="GO" id="GO:0005789">
    <property type="term" value="C:endoplasmic reticulum membrane"/>
    <property type="evidence" value="ECO:0007669"/>
    <property type="project" value="UniProtKB-SubCell"/>
</dbReference>
<dbReference type="GO" id="GO:0016020">
    <property type="term" value="C:membrane"/>
    <property type="evidence" value="ECO:0000303"/>
    <property type="project" value="UniProtKB"/>
</dbReference>
<dbReference type="GO" id="GO:0016717">
    <property type="term" value="F:oxidoreductase activity, acting on paired donors, with oxidation of a pair of donors resulting in the reduction of molecular oxygen to two molecules of water"/>
    <property type="evidence" value="ECO:0000318"/>
    <property type="project" value="GO_Central"/>
</dbReference>
<dbReference type="GO" id="GO:0010467">
    <property type="term" value="P:gene expression"/>
    <property type="evidence" value="ECO:0007669"/>
    <property type="project" value="Ensembl"/>
</dbReference>
<dbReference type="GO" id="GO:0006629">
    <property type="term" value="P:lipid metabolic process"/>
    <property type="evidence" value="ECO:0000318"/>
    <property type="project" value="GO_Central"/>
</dbReference>
<dbReference type="GO" id="GO:0006665">
    <property type="term" value="P:sphingolipid metabolic process"/>
    <property type="evidence" value="ECO:0007669"/>
    <property type="project" value="UniProtKB-UniPathway"/>
</dbReference>
<dbReference type="GO" id="GO:0006636">
    <property type="term" value="P:unsaturated fatty acid biosynthetic process"/>
    <property type="evidence" value="ECO:0000303"/>
    <property type="project" value="UniProtKB"/>
</dbReference>
<dbReference type="CDD" id="cd03506">
    <property type="entry name" value="Delta6-FADS-like"/>
    <property type="match status" value="1"/>
</dbReference>
<dbReference type="Gene3D" id="3.10.120.10">
    <property type="entry name" value="Cytochrome b5-like heme/steroid binding domain"/>
    <property type="match status" value="1"/>
</dbReference>
<dbReference type="InterPro" id="IPR001199">
    <property type="entry name" value="Cyt_B5-like_heme/steroid-bd"/>
</dbReference>
<dbReference type="InterPro" id="IPR036400">
    <property type="entry name" value="Cyt_B5-like_heme/steroid_sf"/>
</dbReference>
<dbReference type="InterPro" id="IPR005804">
    <property type="entry name" value="FA_desaturase_dom"/>
</dbReference>
<dbReference type="InterPro" id="IPR012171">
    <property type="entry name" value="Fatty_acid_desaturase"/>
</dbReference>
<dbReference type="PANTHER" id="PTHR19353">
    <property type="entry name" value="FATTY ACID DESATURASE 2"/>
    <property type="match status" value="1"/>
</dbReference>
<dbReference type="PANTHER" id="PTHR19353:SF11">
    <property type="entry name" value="FATTY ACID DESATURASE 3"/>
    <property type="match status" value="1"/>
</dbReference>
<dbReference type="Pfam" id="PF00173">
    <property type="entry name" value="Cyt-b5"/>
    <property type="match status" value="1"/>
</dbReference>
<dbReference type="Pfam" id="PF00487">
    <property type="entry name" value="FA_desaturase"/>
    <property type="match status" value="1"/>
</dbReference>
<dbReference type="PIRSF" id="PIRSF015921">
    <property type="entry name" value="FA_sphinglp_des"/>
    <property type="match status" value="1"/>
</dbReference>
<dbReference type="SMART" id="SM01117">
    <property type="entry name" value="Cyt-b5"/>
    <property type="match status" value="1"/>
</dbReference>
<dbReference type="SUPFAM" id="SSF55856">
    <property type="entry name" value="Cytochrome b5-like heme/steroid binding domain"/>
    <property type="match status" value="1"/>
</dbReference>
<dbReference type="PROSITE" id="PS50255">
    <property type="entry name" value="CYTOCHROME_B5_2"/>
    <property type="match status" value="1"/>
</dbReference>
<organism>
    <name type="scientific">Homo sapiens</name>
    <name type="common">Human</name>
    <dbReference type="NCBI Taxonomy" id="9606"/>
    <lineage>
        <taxon>Eukaryota</taxon>
        <taxon>Metazoa</taxon>
        <taxon>Chordata</taxon>
        <taxon>Craniata</taxon>
        <taxon>Vertebrata</taxon>
        <taxon>Euteleostomi</taxon>
        <taxon>Mammalia</taxon>
        <taxon>Eutheria</taxon>
        <taxon>Euarchontoglires</taxon>
        <taxon>Primates</taxon>
        <taxon>Haplorrhini</taxon>
        <taxon>Catarrhini</taxon>
        <taxon>Hominidae</taxon>
        <taxon>Homo</taxon>
    </lineage>
</organism>
<keyword id="KW-0249">Electron transport</keyword>
<keyword id="KW-0256">Endoplasmic reticulum</keyword>
<keyword id="KW-0275">Fatty acid biosynthesis</keyword>
<keyword id="KW-0276">Fatty acid metabolism</keyword>
<keyword id="KW-0444">Lipid biosynthesis</keyword>
<keyword id="KW-0443">Lipid metabolism</keyword>
<keyword id="KW-0472">Membrane</keyword>
<keyword id="KW-0560">Oxidoreductase</keyword>
<keyword id="KW-1267">Proteomics identification</keyword>
<keyword id="KW-1185">Reference proteome</keyword>
<keyword id="KW-0812">Transmembrane</keyword>
<keyword id="KW-1133">Transmembrane helix</keyword>
<keyword id="KW-0813">Transport</keyword>
<proteinExistence type="evidence at protein level"/>
<name>FADS3_HUMAN</name>
<sequence>MGGVGEPGPREGPAQPGAPLPTFCWEQIRAHDQPGDKWLVIERRVYDISRWAQRHPGGSRLIGHHGAEDATDAFRAFHQDLNFVRKFLQPLLIGELAPEEPSQDGPLNAQLVEDFRALHQAAEDMKLFDASPTFFAFLLGHILAMEVLAWLLIYLLGPGWVPSALAAFILAISQAQSWCLQHDLGHASIFKKSWWNHVAQKFVMGQLKGFSAHWWNFRHFQHHAKPNIFHKDPDVTVAPVFLLGESSVEYGKKKRRYLPYNQQHLYFFLIGPPLLTLVNFEVENLAYMLVCMQWADLLWAASFYARFFLSYLPFYGVPGVLLFFVAVRVLESHWFVWITQMNHIPKEIGHEKHRDWVSSQLAATCNVEPSLFTNWFSGHLNFQIEHHLFPRMPRHNYSRVAPLVKSLCAKHGLSYEVKPFLTALVDIVRSLKKSGDIWLDAYLHQ</sequence>
<reference key="1">
    <citation type="journal article" date="2000" name="Genomics">
        <title>cDNA cloning, genomic structure, and chromosomal localization of three members of the human fatty acid desaturase family.</title>
        <authorList>
            <person name="Marquardt A."/>
            <person name="Stoehr H."/>
            <person name="White K."/>
            <person name="Weber B.H."/>
        </authorList>
    </citation>
    <scope>NUCLEOTIDE SEQUENCE [MRNA]</scope>
</reference>
<reference key="2">
    <citation type="submission" date="1999-03" db="EMBL/GenBank/DDBJ databases">
        <title>Human retina-specific delta 6 fatty acid desaturase.</title>
        <authorList>
            <person name="Li W."/>
            <person name="Metzker M.L."/>
            <person name="Caskey C.T."/>
            <person name="Petrukhin K."/>
        </authorList>
    </citation>
    <scope>NUCLEOTIDE SEQUENCE [MRNA]</scope>
</reference>
<reference key="3">
    <citation type="journal article" date="2006" name="Nature">
        <title>Human chromosome 11 DNA sequence and analysis including novel gene identification.</title>
        <authorList>
            <person name="Taylor T.D."/>
            <person name="Noguchi H."/>
            <person name="Totoki Y."/>
            <person name="Toyoda A."/>
            <person name="Kuroki Y."/>
            <person name="Dewar K."/>
            <person name="Lloyd C."/>
            <person name="Itoh T."/>
            <person name="Takeda T."/>
            <person name="Kim D.-W."/>
            <person name="She X."/>
            <person name="Barlow K.F."/>
            <person name="Bloom T."/>
            <person name="Bruford E."/>
            <person name="Chang J.L."/>
            <person name="Cuomo C.A."/>
            <person name="Eichler E."/>
            <person name="FitzGerald M.G."/>
            <person name="Jaffe D.B."/>
            <person name="LaButti K."/>
            <person name="Nicol R."/>
            <person name="Park H.-S."/>
            <person name="Seaman C."/>
            <person name="Sougnez C."/>
            <person name="Yang X."/>
            <person name="Zimmer A.R."/>
            <person name="Zody M.C."/>
            <person name="Birren B.W."/>
            <person name="Nusbaum C."/>
            <person name="Fujiyama A."/>
            <person name="Hattori M."/>
            <person name="Rogers J."/>
            <person name="Lander E.S."/>
            <person name="Sakaki Y."/>
        </authorList>
    </citation>
    <scope>NUCLEOTIDE SEQUENCE [LARGE SCALE GENOMIC DNA]</scope>
</reference>
<reference key="4">
    <citation type="journal article" date="2004" name="Genome Res.">
        <title>The status, quality, and expansion of the NIH full-length cDNA project: the Mammalian Gene Collection (MGC).</title>
        <authorList>
            <consortium name="The MGC Project Team"/>
        </authorList>
    </citation>
    <scope>NUCLEOTIDE SEQUENCE [LARGE SCALE MRNA]</scope>
    <source>
        <tissue>Muscle</tissue>
    </source>
</reference>
<reference key="5">
    <citation type="journal article" date="2010" name="J. Lipid Res.">
        <title>The fatty acid desaturase 3 gene encodes for different FADS3 protein isoforms in mammalian tissues.</title>
        <authorList>
            <person name="Pedrono F."/>
            <person name="Blanchard H."/>
            <person name="Kloareg M."/>
            <person name="D'andrea S."/>
            <person name="Daval S."/>
            <person name="Rioux V."/>
            <person name="Legrand P."/>
        </authorList>
    </citation>
    <scope>TISSUE SPECIFICITY</scope>
</reference>
<reference key="6">
    <citation type="journal article" date="2020" name="FASEB J.">
        <title>Biosynthesis of the anti-lipid-microdomain sphingoid base 4,14-sphingadiene by the ceramide desaturase FADS3.</title>
        <authorList>
            <person name="Jojima K."/>
            <person name="Edagawa M."/>
            <person name="Sawai M."/>
            <person name="Ohno Y."/>
            <person name="Kihara A."/>
        </authorList>
    </citation>
    <scope>FUNCTION</scope>
    <scope>CATALYTIC ACTIVITY</scope>
    <scope>SUBCELLULAR LOCATION</scope>
</reference>
<reference key="7">
    <citation type="journal article" date="2020" name="J. Biol. Chem.">
        <title>FADS3 is a Delta14Z sphingoid base desaturase that contributes to gender differences in the human plasma sphingolipidome.</title>
        <authorList>
            <person name="Karsai G."/>
            <person name="Lone M."/>
            <person name="Kutalik Z."/>
            <person name="Brenna J.T."/>
            <person name="Li H."/>
            <person name="Pan D."/>
            <person name="von Eckardstein A."/>
            <person name="Hornemann T."/>
        </authorList>
    </citation>
    <scope>FUNCTION</scope>
    <scope>CATALYTIC ACTIVITY</scope>
</reference>
<reference key="8">
    <citation type="journal article" date="2023" name="Biochim. Biophys. Acta">
        <title>Metabolism of sphingadiene and characterization of the sphingadiene-producing enzyme FADS3.</title>
        <authorList>
            <person name="Jojima K."/>
            <person name="Kihara A."/>
        </authorList>
    </citation>
    <scope>FUNCTION</scope>
    <scope>CATALYTIC ACTIVITY</scope>
</reference>
<feature type="chain" id="PRO_0000307108" description="Fatty acid desaturase 3">
    <location>
        <begin position="1"/>
        <end position="445"/>
    </location>
</feature>
<feature type="topological domain" description="Cytoplasmic" evidence="14">
    <location>
        <begin position="1"/>
        <end position="133"/>
    </location>
</feature>
<feature type="transmembrane region" description="Helical" evidence="2">
    <location>
        <begin position="134"/>
        <end position="154"/>
    </location>
</feature>
<feature type="topological domain" description="Lumenal" evidence="14">
    <location>
        <begin position="155"/>
        <end position="159"/>
    </location>
</feature>
<feature type="transmembrane region" description="Helical" evidence="2">
    <location>
        <begin position="160"/>
        <end position="180"/>
    </location>
</feature>
<feature type="topological domain" description="Cytoplasmic" evidence="14">
    <location>
        <begin position="181"/>
        <end position="263"/>
    </location>
</feature>
<feature type="transmembrane region" description="Helical" evidence="2">
    <location>
        <begin position="264"/>
        <end position="284"/>
    </location>
</feature>
<feature type="topological domain" description="Lumenal" evidence="14">
    <location>
        <begin position="285"/>
        <end position="306"/>
    </location>
</feature>
<feature type="transmembrane region" description="Helical" evidence="2">
    <location>
        <begin position="307"/>
        <end position="327"/>
    </location>
</feature>
<feature type="topological domain" description="Cytoplasmic" evidence="14">
    <location>
        <begin position="328"/>
        <end position="445"/>
    </location>
</feature>
<feature type="domain" description="Cytochrome b5 heme-binding" evidence="3">
    <location>
        <begin position="20"/>
        <end position="97"/>
    </location>
</feature>
<feature type="region of interest" description="Disordered" evidence="4">
    <location>
        <begin position="1"/>
        <end position="21"/>
    </location>
</feature>
<feature type="short sequence motif" description="Histidine box-1" evidence="9">
    <location>
        <begin position="182"/>
        <end position="186"/>
    </location>
</feature>
<feature type="short sequence motif" description="Histidine box-2" evidence="9">
    <location>
        <begin position="219"/>
        <end position="223"/>
    </location>
</feature>
<feature type="short sequence motif" description="Histidine box-3" evidence="9">
    <location>
        <begin position="383"/>
        <end position="387"/>
    </location>
</feature>
<feature type="sequence variant" id="VAR_035341" description="In dbSNP:rs35479241.">
    <original>K</original>
    <variation>N</variation>
    <location>
        <position position="192"/>
    </location>
</feature>
<feature type="sequence variant" id="VAR_035342" description="In dbSNP:rs34511441.">
    <original>N</original>
    <variation>K</variation>
    <location>
        <position position="216"/>
    </location>
</feature>
<evidence type="ECO:0000250" key="1">
    <source>
        <dbReference type="UniProtKB" id="Q8K1P9"/>
    </source>
</evidence>
<evidence type="ECO:0000255" key="2"/>
<evidence type="ECO:0000255" key="3">
    <source>
        <dbReference type="PROSITE-ProRule" id="PRU00279"/>
    </source>
</evidence>
<evidence type="ECO:0000256" key="4">
    <source>
        <dbReference type="SAM" id="MobiDB-lite"/>
    </source>
</evidence>
<evidence type="ECO:0000269" key="5">
    <source>
    </source>
</evidence>
<evidence type="ECO:0000269" key="6">
    <source>
    </source>
</evidence>
<evidence type="ECO:0000269" key="7">
    <source>
    </source>
</evidence>
<evidence type="ECO:0000269" key="8">
    <source>
    </source>
</evidence>
<evidence type="ECO:0000303" key="9">
    <source>
    </source>
</evidence>
<evidence type="ECO:0000303" key="10">
    <source>
    </source>
</evidence>
<evidence type="ECO:0000303" key="11">
    <source>
    </source>
</evidence>
<evidence type="ECO:0000303" key="12">
    <source>
    </source>
</evidence>
<evidence type="ECO:0000303" key="13">
    <source>
    </source>
</evidence>
<evidence type="ECO:0000305" key="14"/>
<evidence type="ECO:0000305" key="15">
    <source>
    </source>
</evidence>
<evidence type="ECO:0000305" key="16">
    <source>
    </source>
</evidence>
<evidence type="ECO:0000305" key="17">
    <source>
    </source>
</evidence>
<evidence type="ECO:0000312" key="18">
    <source>
        <dbReference type="HGNC" id="HGNC:3576"/>
    </source>
</evidence>
<comment type="function">
    <text evidence="1 6 7 8 15">Mammals have different sphingoid bases that differ in their length and/or pattern of desaturation and hydroxyl groups. The predominant sphingoid base that comprises mammalian ceramides is sphing-4-enine (sphingosine or SPH) which has a trans (E) desaturation at carbon 4 (PubMed:31862735, PubMed:31916624). FADS3 is a desaturase that introduces a cis (Z) double bond between carbon 14 and carbon 15 of the sphingoid base (also known as long chain base, LCB), producing LCBs such as sphinga-4,14-dienine (SPD, d18:2(4E,14Z)) from SPH (PubMed:31862735, PubMed:31916624, PubMed:37209771). Prefers SPH-containing ceramides (N-acylsphing-4-enines) as substrates (PubMed:31862735, PubMed:31916624, PubMed:37209771). Capable of metabolizing also the SPH in its free form (PubMed:31862735). SPD ceramides occur widely in mammalian tissues and cells (PubMed:31916624). Due to their unusual structure containing a cis double bond, SPD ceramides may have an opposite, negative role in lipid microdomain formation relative to conventional ceramides (PubMed:31916624). Could be involved in the detoxification of 1-deoxy sphingolipids, by desaturating the cytotoxic 1-deoxysphinganine (1-deoxySA, m18:0), produced under pathological conditions, to 1-deoxysphingenine (1-deoxysphingosine, 1-deoxySO, m18:1) (Probable). Although prefers SPH-containing ceramides (N-acylsphing-4-enines) as substrates, it also exhibits activity toward dihydrosphingosine-containing CERs (N-acylsphinganines) and produces 14Z-SPH-containing sphingolipids,which can be found in patients with DEGS1 mutations (PubMed:37209771). Its desaturase mechanism involves an electron transfer facilitated by cytochrome b5 (PubMed:37209771). FADS3 also acts as a methyl-end fatty acyl coenzyme A (CoA) desaturase that introduces a cis double bond between the preexisting double bond and the terminal methyl group of the fatty acyl chain (By similarity). Desaturates (11E)-octadecenoate (trans-vaccenoate, the predominant trans fatty acid in human milk) at carbon 13 to generate (11E,13Z)-octadecadienoate (also known as conjugated linoleic acid 11E,13Z-CLA) (By similarity).</text>
</comment>
<comment type="catalytic activity">
    <reaction evidence="6 7 8">
        <text>an N-acylsphing-4-enine + 2 Fe(II)-[cytochrome b5] + O2 + 2 H(+) = an N-acyl-sphinga-4E,14Z-dienine + 2 Fe(III)-[cytochrome b5] + 2 H2O</text>
        <dbReference type="Rhea" id="RHEA:63928"/>
        <dbReference type="Rhea" id="RHEA-COMP:10438"/>
        <dbReference type="Rhea" id="RHEA-COMP:10439"/>
        <dbReference type="ChEBI" id="CHEBI:15377"/>
        <dbReference type="ChEBI" id="CHEBI:15378"/>
        <dbReference type="ChEBI" id="CHEBI:15379"/>
        <dbReference type="ChEBI" id="CHEBI:29033"/>
        <dbReference type="ChEBI" id="CHEBI:29034"/>
        <dbReference type="ChEBI" id="CHEBI:52639"/>
        <dbReference type="ChEBI" id="CHEBI:139573"/>
    </reaction>
    <physiologicalReaction direction="left-to-right" evidence="6 7 8">
        <dbReference type="Rhea" id="RHEA:63929"/>
    </physiologicalReaction>
</comment>
<comment type="catalytic activity">
    <reaction evidence="7 8">
        <text>N-(hexanoyl)sphing-4-enine + 2 Fe(II)-[cytochrome b5] + O2 + 2 H(+) = N-hexanoyl-sphinga-4E,14Z-dienine + 2 Fe(III)-[cytochrome b5] + 2 H2O</text>
        <dbReference type="Rhea" id="RHEA:63940"/>
        <dbReference type="Rhea" id="RHEA-COMP:10438"/>
        <dbReference type="Rhea" id="RHEA-COMP:10439"/>
        <dbReference type="ChEBI" id="CHEBI:15377"/>
        <dbReference type="ChEBI" id="CHEBI:15378"/>
        <dbReference type="ChEBI" id="CHEBI:15379"/>
        <dbReference type="ChEBI" id="CHEBI:29033"/>
        <dbReference type="ChEBI" id="CHEBI:29034"/>
        <dbReference type="ChEBI" id="CHEBI:63867"/>
        <dbReference type="ChEBI" id="CHEBI:149631"/>
    </reaction>
    <physiologicalReaction direction="left-to-right" evidence="7 8">
        <dbReference type="Rhea" id="RHEA:63941"/>
    </physiologicalReaction>
</comment>
<comment type="catalytic activity">
    <reaction evidence="6">
        <text>sphing-4-enine + 2 Fe(II)-[cytochrome b5] + O2 + 2 H(+) = sphinga-4E,14Z-dienine + 2 Fe(III)-[cytochrome b5] + 2 H2O</text>
        <dbReference type="Rhea" id="RHEA:76483"/>
        <dbReference type="Rhea" id="RHEA-COMP:10438"/>
        <dbReference type="Rhea" id="RHEA-COMP:10439"/>
        <dbReference type="ChEBI" id="CHEBI:15377"/>
        <dbReference type="ChEBI" id="CHEBI:15378"/>
        <dbReference type="ChEBI" id="CHEBI:15379"/>
        <dbReference type="ChEBI" id="CHEBI:29033"/>
        <dbReference type="ChEBI" id="CHEBI:29034"/>
        <dbReference type="ChEBI" id="CHEBI:57756"/>
        <dbReference type="ChEBI" id="CHEBI:83568"/>
    </reaction>
    <physiologicalReaction direction="left-to-right" evidence="15">
        <dbReference type="Rhea" id="RHEA:76484"/>
    </physiologicalReaction>
</comment>
<comment type="catalytic activity">
    <reaction evidence="1">
        <text>(11E)-octadecenoyl-CoA + 2 Fe(II)-[cytochrome b5] + O2 + 2 H(+) = (11E,13Z)-octadecadienoyl-CoA + 2 Fe(III)-[cytochrome b5] + 2 H2O</text>
        <dbReference type="Rhea" id="RHEA:46056"/>
        <dbReference type="Rhea" id="RHEA-COMP:10438"/>
        <dbReference type="Rhea" id="RHEA-COMP:10439"/>
        <dbReference type="ChEBI" id="CHEBI:15377"/>
        <dbReference type="ChEBI" id="CHEBI:15378"/>
        <dbReference type="ChEBI" id="CHEBI:15379"/>
        <dbReference type="ChEBI" id="CHEBI:29033"/>
        <dbReference type="ChEBI" id="CHEBI:29034"/>
        <dbReference type="ChEBI" id="CHEBI:74296"/>
        <dbReference type="ChEBI" id="CHEBI:85650"/>
    </reaction>
    <physiologicalReaction direction="left-to-right" evidence="1">
        <dbReference type="Rhea" id="RHEA:46057"/>
    </physiologicalReaction>
</comment>
<comment type="catalytic activity">
    <reaction evidence="6">
        <text>N-acyl-1-deoxysphinganine + 2 Fe(II)-[cytochrome b5] + O2 + 2 H(+) = N-acyl-1-deoxysphing-14Z-enine + 2 Fe(III)-[cytochrome b5] + 2 H2O</text>
        <dbReference type="Rhea" id="RHEA:76487"/>
        <dbReference type="Rhea" id="RHEA-COMP:10438"/>
        <dbReference type="Rhea" id="RHEA-COMP:10439"/>
        <dbReference type="ChEBI" id="CHEBI:15377"/>
        <dbReference type="ChEBI" id="CHEBI:15378"/>
        <dbReference type="ChEBI" id="CHEBI:15379"/>
        <dbReference type="ChEBI" id="CHEBI:29033"/>
        <dbReference type="ChEBI" id="CHEBI:29034"/>
        <dbReference type="ChEBI" id="CHEBI:67111"/>
        <dbReference type="ChEBI" id="CHEBI:195246"/>
    </reaction>
    <physiologicalReaction direction="left-to-right" evidence="15">
        <dbReference type="Rhea" id="RHEA:76488"/>
    </physiologicalReaction>
</comment>
<comment type="catalytic activity">
    <reaction evidence="8">
        <text>an N-acylsphinganine + 2 Fe(II)-[cytochrome b5] + O2 + 2 H(+) = an N-acylsphing-14Z-enine + 2 Fe(III)-[cytochrome b5] + 2 H2O</text>
        <dbReference type="Rhea" id="RHEA:76563"/>
        <dbReference type="Rhea" id="RHEA-COMP:10438"/>
        <dbReference type="Rhea" id="RHEA-COMP:10439"/>
        <dbReference type="ChEBI" id="CHEBI:15377"/>
        <dbReference type="ChEBI" id="CHEBI:15378"/>
        <dbReference type="ChEBI" id="CHEBI:15379"/>
        <dbReference type="ChEBI" id="CHEBI:29033"/>
        <dbReference type="ChEBI" id="CHEBI:29034"/>
        <dbReference type="ChEBI" id="CHEBI:31488"/>
        <dbReference type="ChEBI" id="CHEBI:195278"/>
    </reaction>
    <physiologicalReaction direction="left-to-right" evidence="17">
        <dbReference type="Rhea" id="RHEA:76564"/>
    </physiologicalReaction>
</comment>
<comment type="pathway">
    <text evidence="15 16 17">Lipid metabolism; sphingolipid metabolism.</text>
</comment>
<comment type="pathway">
    <text evidence="1">Lipid metabolism; polyunsaturated fatty acid biosynthesis.</text>
</comment>
<comment type="interaction">
    <interactant intactId="EBI-17548630">
        <id>Q9Y5Q0</id>
    </interactant>
    <interactant intactId="EBI-3923585">
        <id>Q8N5I4</id>
        <label>DHRSX</label>
    </interactant>
    <organismsDiffer>false</organismsDiffer>
    <experiments>3</experiments>
</comment>
<comment type="subcellular location">
    <subcellularLocation>
        <location evidence="7">Endoplasmic reticulum membrane</location>
        <topology evidence="2">Multi-pass membrane protein</topology>
    </subcellularLocation>
</comment>
<comment type="tissue specificity">
    <text evidence="5">Highly expressed in various organs and tissues including liver, kidney, brain, lung, pancreas, testis, ovary and skeletal muscle (at protein level).</text>
</comment>
<comment type="domain">
    <text evidence="9">The protein sequence includes a number of characteristic features of microsomal fatty acid desaturases including the three histidine boxes (these domains may contain the active site and/or be involved in metal ion binding), and the N-terminal cytochrome b5 domain containing the heme-binding motif, HPGG, similar to that of other fatty acid desaturases.</text>
</comment>
<comment type="miscellaneous">
    <text evidence="5">A 28 kDa isoform is expressed in lung, kidney, pancreas and ovary (at protein level).</text>
</comment>
<comment type="similarity">
    <text evidence="17">Belongs to the fatty acid desaturase type 1 family.</text>
</comment>
<comment type="sequence caution" evidence="14">
    <conflict type="erroneous gene model prediction">
        <sequence resource="EMBL-CDS" id="AAC23396"/>
    </conflict>
</comment>
<gene>
    <name evidence="10 18" type="primary">FADS3</name>
    <name type="synonym">CYB5RP</name>
</gene>
<protein>
    <recommendedName>
        <fullName evidence="1">Fatty acid desaturase 3</fullName>
        <shortName evidence="11 12 13">FADS3</shortName>
        <ecNumber evidence="6 7 8">1.14.19.-</ecNumber>
    </recommendedName>
    <alternativeName>
        <fullName evidence="1">Delta(13) fatty acid desaturase</fullName>
        <shortName evidence="1">Delta(13) desaturase</shortName>
    </alternativeName>
</protein>